<name>RN112_MOUSE</name>
<keyword id="KW-0025">Alternative splicing</keyword>
<keyword id="KW-0966">Cell projection</keyword>
<keyword id="KW-0963">Cytoplasm</keyword>
<keyword id="KW-0968">Cytoplasmic vesicle</keyword>
<keyword id="KW-0967">Endosome</keyword>
<keyword id="KW-0342">GTP-binding</keyword>
<keyword id="KW-0472">Membrane</keyword>
<keyword id="KW-0479">Metal-binding</keyword>
<keyword id="KW-0524">Neurogenesis</keyword>
<keyword id="KW-0547">Nucleotide-binding</keyword>
<keyword id="KW-0539">Nucleus</keyword>
<keyword id="KW-1185">Reference proteome</keyword>
<keyword id="KW-0770">Synapse</keyword>
<keyword id="KW-0808">Transferase</keyword>
<keyword id="KW-0812">Transmembrane</keyword>
<keyword id="KW-1133">Transmembrane helix</keyword>
<keyword id="KW-0832">Ubl conjugation</keyword>
<keyword id="KW-0833">Ubl conjugation pathway</keyword>
<keyword id="KW-0862">Zinc</keyword>
<keyword id="KW-0863">Zinc-finger</keyword>
<dbReference type="EC" id="2.3.2.27" evidence="15"/>
<dbReference type="EMBL" id="AB013097">
    <property type="protein sequence ID" value="BAA34180.1"/>
    <property type="status" value="ALT_FRAME"/>
    <property type="molecule type" value="mRNA"/>
</dbReference>
<dbReference type="EMBL" id="AL604029">
    <property type="status" value="NOT_ANNOTATED_CDS"/>
    <property type="molecule type" value="Genomic_DNA"/>
</dbReference>
<dbReference type="EMBL" id="BC013139">
    <property type="protein sequence ID" value="AAH13139.1"/>
    <property type="molecule type" value="mRNA"/>
</dbReference>
<dbReference type="EMBL" id="BC037118">
    <property type="protein sequence ID" value="AAH37118.1"/>
    <property type="molecule type" value="mRNA"/>
</dbReference>
<dbReference type="EMBL" id="AK165038">
    <property type="protein sequence ID" value="BAE38012.1"/>
    <property type="molecule type" value="mRNA"/>
</dbReference>
<dbReference type="CCDS" id="CCDS24812.1">
    <molecule id="Q96DY5-1"/>
</dbReference>
<dbReference type="CCDS" id="CCDS78960.1">
    <molecule id="Q96DY5-2"/>
</dbReference>
<dbReference type="CCDS" id="CCDS88167.1">
    <molecule id="Q96DY5-3"/>
</dbReference>
<dbReference type="RefSeq" id="NP_001277953.1">
    <molecule id="Q96DY5-2"/>
    <property type="nucleotide sequence ID" value="NM_001291024.1"/>
</dbReference>
<dbReference type="RefSeq" id="NP_001346059.1">
    <molecule id="Q96DY5-3"/>
    <property type="nucleotide sequence ID" value="NM_001359130.1"/>
</dbReference>
<dbReference type="RefSeq" id="NP_033574.2">
    <molecule id="Q96DY5-1"/>
    <property type="nucleotide sequence ID" value="NM_009548.3"/>
</dbReference>
<dbReference type="RefSeq" id="XP_006533241.1">
    <molecule id="Q96DY5-3"/>
    <property type="nucleotide sequence ID" value="XM_006533178.2"/>
</dbReference>
<dbReference type="RefSeq" id="XP_006533242.1">
    <property type="nucleotide sequence ID" value="XM_006533179.2"/>
</dbReference>
<dbReference type="RefSeq" id="XP_006533245.1">
    <molecule id="Q96DY5-1"/>
    <property type="nucleotide sequence ID" value="XM_006533182.5"/>
</dbReference>
<dbReference type="RefSeq" id="XP_006533246.1">
    <molecule id="Q96DY5-2"/>
    <property type="nucleotide sequence ID" value="XM_006533183.2"/>
</dbReference>
<dbReference type="SMR" id="Q96DY5"/>
<dbReference type="BioGRID" id="204645">
    <property type="interactions" value="10"/>
</dbReference>
<dbReference type="FunCoup" id="Q96DY5">
    <property type="interactions" value="71"/>
</dbReference>
<dbReference type="STRING" id="10090.ENSMUSP00000056464"/>
<dbReference type="GlyGen" id="Q96DY5">
    <property type="glycosylation" value="2 sites, 2 N-linked glycans (2 sites)"/>
</dbReference>
<dbReference type="iPTMnet" id="Q96DY5"/>
<dbReference type="PhosphoSitePlus" id="Q96DY5"/>
<dbReference type="PaxDb" id="10090-ENSMUSP00000056464"/>
<dbReference type="ProteomicsDB" id="301607">
    <molecule id="Q96DY5-1"/>
</dbReference>
<dbReference type="ProteomicsDB" id="301608">
    <molecule id="Q96DY5-2"/>
</dbReference>
<dbReference type="ProteomicsDB" id="301609">
    <molecule id="Q96DY5-3"/>
</dbReference>
<dbReference type="Antibodypedia" id="3002">
    <property type="antibodies" value="159 antibodies from 23 providers"/>
</dbReference>
<dbReference type="DNASU" id="22671"/>
<dbReference type="Ensembl" id="ENSMUST00000054927.14">
    <molecule id="Q96DY5-1"/>
    <property type="protein sequence ID" value="ENSMUSP00000056464.8"/>
    <property type="gene ID" value="ENSMUSG00000010086.18"/>
</dbReference>
<dbReference type="Ensembl" id="ENSMUST00000060255.14">
    <molecule id="Q96DY5-3"/>
    <property type="protein sequence ID" value="ENSMUSP00000059903.8"/>
    <property type="gene ID" value="ENSMUSG00000010086.18"/>
</dbReference>
<dbReference type="Ensembl" id="ENSMUST00000102661.4">
    <molecule id="Q96DY5-2"/>
    <property type="protein sequence ID" value="ENSMUSP00000099722.4"/>
    <property type="gene ID" value="ENSMUSG00000010086.18"/>
</dbReference>
<dbReference type="GeneID" id="22671"/>
<dbReference type="KEGG" id="mmu:22671"/>
<dbReference type="UCSC" id="uc007jhj.2">
    <molecule id="Q96DY5-1"/>
    <property type="organism name" value="mouse"/>
</dbReference>
<dbReference type="UCSC" id="uc007jhk.2">
    <molecule id="Q96DY5-3"/>
    <property type="organism name" value="mouse"/>
</dbReference>
<dbReference type="UCSC" id="uc007jhl.2">
    <molecule id="Q96DY5-2"/>
    <property type="organism name" value="mouse"/>
</dbReference>
<dbReference type="AGR" id="MGI:106611"/>
<dbReference type="CTD" id="7732"/>
<dbReference type="MGI" id="MGI:106611">
    <property type="gene designation" value="Rnf112"/>
</dbReference>
<dbReference type="VEuPathDB" id="HostDB:ENSMUSG00000010086"/>
<dbReference type="eggNOG" id="KOG2037">
    <property type="taxonomic scope" value="Eukaryota"/>
</dbReference>
<dbReference type="eggNOG" id="KOG2177">
    <property type="taxonomic scope" value="Eukaryota"/>
</dbReference>
<dbReference type="GeneTree" id="ENSGT00940000160153"/>
<dbReference type="HOGENOM" id="CLU_034812_0_0_1"/>
<dbReference type="InParanoid" id="Q96DY5"/>
<dbReference type="OMA" id="QQDMATK"/>
<dbReference type="UniPathway" id="UPA00143"/>
<dbReference type="BioGRID-ORCS" id="22671">
    <property type="hits" value="6 hits in 76 CRISPR screens"/>
</dbReference>
<dbReference type="PRO" id="PR:Q96DY5"/>
<dbReference type="Proteomes" id="UP000000589">
    <property type="component" value="Chromosome 11"/>
</dbReference>
<dbReference type="RNAct" id="Q96DY5">
    <property type="molecule type" value="protein"/>
</dbReference>
<dbReference type="Bgee" id="ENSMUSG00000010086">
    <property type="expression patterns" value="Expressed in cerebellar vermis and 119 other cell types or tissues"/>
</dbReference>
<dbReference type="GO" id="GO:0044297">
    <property type="term" value="C:cell body"/>
    <property type="evidence" value="ECO:0000314"/>
    <property type="project" value="UniProtKB"/>
</dbReference>
<dbReference type="GO" id="GO:0005737">
    <property type="term" value="C:cytoplasm"/>
    <property type="evidence" value="ECO:0000314"/>
    <property type="project" value="UniProtKB"/>
</dbReference>
<dbReference type="GO" id="GO:0005768">
    <property type="term" value="C:endosome"/>
    <property type="evidence" value="ECO:0000314"/>
    <property type="project" value="UniProtKB"/>
</dbReference>
<dbReference type="GO" id="GO:0016020">
    <property type="term" value="C:membrane"/>
    <property type="evidence" value="ECO:0007669"/>
    <property type="project" value="UniProtKB-SubCell"/>
</dbReference>
<dbReference type="GO" id="GO:0043005">
    <property type="term" value="C:neuron projection"/>
    <property type="evidence" value="ECO:0007669"/>
    <property type="project" value="UniProtKB-SubCell"/>
</dbReference>
<dbReference type="GO" id="GO:0016604">
    <property type="term" value="C:nuclear body"/>
    <property type="evidence" value="ECO:0000314"/>
    <property type="project" value="UniProtKB"/>
</dbReference>
<dbReference type="GO" id="GO:0005654">
    <property type="term" value="C:nucleoplasm"/>
    <property type="evidence" value="ECO:0000314"/>
    <property type="project" value="UniProtKB"/>
</dbReference>
<dbReference type="GO" id="GO:0005634">
    <property type="term" value="C:nucleus"/>
    <property type="evidence" value="ECO:0000314"/>
    <property type="project" value="UniProtKB"/>
</dbReference>
<dbReference type="GO" id="GO:0043204">
    <property type="term" value="C:perikaryon"/>
    <property type="evidence" value="ECO:0007669"/>
    <property type="project" value="UniProtKB-SubCell"/>
</dbReference>
<dbReference type="GO" id="GO:0014069">
    <property type="term" value="C:postsynaptic density"/>
    <property type="evidence" value="ECO:0000314"/>
    <property type="project" value="UniProtKB"/>
</dbReference>
<dbReference type="GO" id="GO:0008021">
    <property type="term" value="C:synaptic vesicle"/>
    <property type="evidence" value="ECO:0000314"/>
    <property type="project" value="UniProtKB"/>
</dbReference>
<dbReference type="GO" id="GO:0005525">
    <property type="term" value="F:GTP binding"/>
    <property type="evidence" value="ECO:0000315"/>
    <property type="project" value="UniProtKB"/>
</dbReference>
<dbReference type="GO" id="GO:0003924">
    <property type="term" value="F:GTPase activity"/>
    <property type="evidence" value="ECO:0000314"/>
    <property type="project" value="UniProtKB"/>
</dbReference>
<dbReference type="GO" id="GO:0061630">
    <property type="term" value="F:ubiquitin protein ligase activity"/>
    <property type="evidence" value="ECO:0000314"/>
    <property type="project" value="UniProtKB"/>
</dbReference>
<dbReference type="GO" id="GO:0008270">
    <property type="term" value="F:zinc ion binding"/>
    <property type="evidence" value="ECO:0007669"/>
    <property type="project" value="UniProtKB-KW"/>
</dbReference>
<dbReference type="GO" id="GO:1990403">
    <property type="term" value="P:embryonic brain development"/>
    <property type="evidence" value="ECO:0000315"/>
    <property type="project" value="UniProtKB"/>
</dbReference>
<dbReference type="GO" id="GO:0070315">
    <property type="term" value="P:G1 to G0 transition involved in cell differentiation"/>
    <property type="evidence" value="ECO:0000315"/>
    <property type="project" value="MGI"/>
</dbReference>
<dbReference type="GO" id="GO:0030182">
    <property type="term" value="P:neuron differentiation"/>
    <property type="evidence" value="ECO:0000315"/>
    <property type="project" value="UniProtKB"/>
</dbReference>
<dbReference type="GO" id="GO:0045687">
    <property type="term" value="P:positive regulation of glial cell differentiation"/>
    <property type="evidence" value="ECO:0000315"/>
    <property type="project" value="MGI"/>
</dbReference>
<dbReference type="GO" id="GO:0045666">
    <property type="term" value="P:positive regulation of neuron differentiation"/>
    <property type="evidence" value="ECO:0000315"/>
    <property type="project" value="MGI"/>
</dbReference>
<dbReference type="GO" id="GO:0051865">
    <property type="term" value="P:protein autoubiquitination"/>
    <property type="evidence" value="ECO:0000314"/>
    <property type="project" value="UniProtKB"/>
</dbReference>
<dbReference type="GO" id="GO:0051726">
    <property type="term" value="P:regulation of cell cycle"/>
    <property type="evidence" value="ECO:0000250"/>
    <property type="project" value="UniProtKB"/>
</dbReference>
<dbReference type="GO" id="GO:0033194">
    <property type="term" value="P:response to hydroperoxide"/>
    <property type="evidence" value="ECO:0000314"/>
    <property type="project" value="UniProtKB"/>
</dbReference>
<dbReference type="CDD" id="cd01851">
    <property type="entry name" value="GBP"/>
    <property type="match status" value="1"/>
</dbReference>
<dbReference type="CDD" id="cd16538">
    <property type="entry name" value="RING-HC_RNF112"/>
    <property type="match status" value="1"/>
</dbReference>
<dbReference type="FunFam" id="3.30.40.10:FF:000305">
    <property type="entry name" value="RING finger protein 112"/>
    <property type="match status" value="1"/>
</dbReference>
<dbReference type="FunFam" id="3.40.50.300:FF:001009">
    <property type="entry name" value="RING finger protein 112"/>
    <property type="match status" value="1"/>
</dbReference>
<dbReference type="Gene3D" id="3.40.50.300">
    <property type="entry name" value="P-loop containing nucleotide triphosphate hydrolases"/>
    <property type="match status" value="1"/>
</dbReference>
<dbReference type="Gene3D" id="3.30.40.10">
    <property type="entry name" value="Zinc/RING finger domain, C3HC4 (zinc finger)"/>
    <property type="match status" value="1"/>
</dbReference>
<dbReference type="InterPro" id="IPR030386">
    <property type="entry name" value="G_GB1_RHD3_dom"/>
</dbReference>
<dbReference type="InterPro" id="IPR015894">
    <property type="entry name" value="Guanylate-bd_N"/>
</dbReference>
<dbReference type="InterPro" id="IPR027417">
    <property type="entry name" value="P-loop_NTPase"/>
</dbReference>
<dbReference type="InterPro" id="IPR018957">
    <property type="entry name" value="Znf_C3HC4_RING-type"/>
</dbReference>
<dbReference type="InterPro" id="IPR001841">
    <property type="entry name" value="Znf_RING"/>
</dbReference>
<dbReference type="InterPro" id="IPR013083">
    <property type="entry name" value="Znf_RING/FYVE/PHD"/>
</dbReference>
<dbReference type="PANTHER" id="PTHR10751">
    <property type="entry name" value="GUANYLATE BINDING PROTEIN"/>
    <property type="match status" value="1"/>
</dbReference>
<dbReference type="Pfam" id="PF02263">
    <property type="entry name" value="GBP"/>
    <property type="match status" value="1"/>
</dbReference>
<dbReference type="Pfam" id="PF00097">
    <property type="entry name" value="zf-C3HC4"/>
    <property type="match status" value="1"/>
</dbReference>
<dbReference type="SMART" id="SM00184">
    <property type="entry name" value="RING"/>
    <property type="match status" value="1"/>
</dbReference>
<dbReference type="SUPFAM" id="SSF52540">
    <property type="entry name" value="P-loop containing nucleoside triphosphate hydrolases"/>
    <property type="match status" value="1"/>
</dbReference>
<dbReference type="SUPFAM" id="SSF57850">
    <property type="entry name" value="RING/U-box"/>
    <property type="match status" value="1"/>
</dbReference>
<dbReference type="PROSITE" id="PS51715">
    <property type="entry name" value="G_GB1_RHD3"/>
    <property type="match status" value="1"/>
</dbReference>
<dbReference type="PROSITE" id="PS50089">
    <property type="entry name" value="ZF_RING_2"/>
    <property type="match status" value="1"/>
</dbReference>
<accession>Q96DY5</accession>
<accession>Q3TNS6</accession>
<accession>Q5NCN2</accession>
<accession>Q8JZT5</accession>
<accession>Q9Z328</accession>
<organism>
    <name type="scientific">Mus musculus</name>
    <name type="common">Mouse</name>
    <dbReference type="NCBI Taxonomy" id="10090"/>
    <lineage>
        <taxon>Eukaryota</taxon>
        <taxon>Metazoa</taxon>
        <taxon>Chordata</taxon>
        <taxon>Craniata</taxon>
        <taxon>Vertebrata</taxon>
        <taxon>Euteleostomi</taxon>
        <taxon>Mammalia</taxon>
        <taxon>Eutheria</taxon>
        <taxon>Euarchontoglires</taxon>
        <taxon>Glires</taxon>
        <taxon>Rodentia</taxon>
        <taxon>Myomorpha</taxon>
        <taxon>Muroidea</taxon>
        <taxon>Muridae</taxon>
        <taxon>Murinae</taxon>
        <taxon>Mus</taxon>
        <taxon>Mus</taxon>
    </lineage>
</organism>
<feature type="chain" id="PRO_0000415817" description="RING finger protein 112">
    <location>
        <begin position="1"/>
        <end position="654"/>
    </location>
</feature>
<feature type="transmembrane region" description="Helical" evidence="1">
    <location>
        <begin position="570"/>
        <end position="590"/>
    </location>
</feature>
<feature type="transmembrane region" description="Helical" evidence="1">
    <location>
        <begin position="603"/>
        <end position="623"/>
    </location>
</feature>
<feature type="domain" description="GB1/RHD3-type G" evidence="3">
    <location>
        <begin position="189"/>
        <end position="420"/>
    </location>
</feature>
<feature type="zinc finger region" description="RING-type" evidence="2">
    <location>
        <begin position="80"/>
        <end position="121"/>
    </location>
</feature>
<feature type="region of interest" description="Interaction with ZBTB16" evidence="5">
    <location>
        <begin position="154"/>
        <end position="654"/>
    </location>
</feature>
<feature type="binding site" evidence="6">
    <location>
        <begin position="340"/>
        <end position="341"/>
    </location>
    <ligand>
        <name>GTP</name>
        <dbReference type="ChEBI" id="CHEBI:37565"/>
    </ligand>
</feature>
<feature type="splice variant" id="VSP_042392" description="In isoform 2." evidence="14">
    <location>
        <begin position="33"/>
        <end position="55"/>
    </location>
</feature>
<feature type="splice variant" id="VSP_042393" description="In isoform 3." evidence="12">
    <original>I</original>
    <variation>IQVRQFLVSSILTHQSRLPVSGPFLF</variation>
    <location>
        <position position="332"/>
    </location>
</feature>
<feature type="mutagenesis site" description="Loss of endosomal localization." evidence="6">
    <original>H</original>
    <variation>N</variation>
    <location>
        <position position="97"/>
    </location>
</feature>
<feature type="mutagenesis site" description="Reduced GTP-hydrolysis." evidence="6">
    <original>R</original>
    <variation>Q</variation>
    <location>
        <position position="340"/>
    </location>
</feature>
<feature type="sequence conflict" description="In Ref. 1; BAA34180." evidence="15" ref="1">
    <original>S</original>
    <variation>P</variation>
    <location>
        <position position="72"/>
    </location>
</feature>
<feature type="sequence conflict" description="In Ref. 1; BAA34180." evidence="15" ref="1">
    <original>E</original>
    <variation>K</variation>
    <location>
        <position position="151"/>
    </location>
</feature>
<feature type="sequence conflict" description="In Ref. 1; BAA34180." evidence="15" ref="1">
    <original>G</original>
    <variation>A</variation>
    <location>
        <position position="170"/>
    </location>
</feature>
<feature type="sequence conflict" description="In Ref. 4; BAE38012." evidence="15" ref="4">
    <original>N</original>
    <variation>D</variation>
    <location>
        <position position="399"/>
    </location>
</feature>
<sequence length="654" mass="71275">MPRPVLSVTAFCHRLGKRESKRSFMGNSSNSWVLPREEAQGWMGQAVQGGTRTSRSHASFPKLELGLGHRPSPTREPPTCSICLERLREPISLDCGHDFCIRCFSTHRIPGCELPCCPECRKICKQRKGLRSLGERMKLLPQRPLPPALQETCAVRAERLLLVRINASGGLILRMGAINRCLKHPLARDTPVCLLAVLGEQHSGKSFLLDHLLSGLPSLESGDSGRPRAEGSLPGIRWGANGLTRGIWMWSHPFLLGKEGKKVAVFLVDTGDVMSPELSKETRVKLCALTMMLSSYQILNTSQELKDTDLGYLEMFVHVAEVMGKHYGMVPIQHLDLLVRDSSHHNKSGQGHVGDILQKLSGKYPKVQELLLGKRARCYLLPAPERQWVNKDQASPRGNTEDDFSHHFRAYILDVLSTAPQHAKSRCQGYWSEGRAVARGDRRLLTGQQLAQEIKNLSGWMGKTGPSFNSPDEMAAQLHDLRKVEAAKKEFEEYVRQQDIATKRIFSALRVLPDTMRNLLSTQKDAILARHGVALLCKEREQTLEALEAELQAEAKAFMDSYTMRFCGHLAAVGGAVGAGLMGLAGGVVGAGMAAAALAAEAGMVAAGAAVGATGAAVVGGGVGAGLAATVGCMEKEEDERVQGGDREPLLQEE</sequence>
<evidence type="ECO:0000255" key="1"/>
<evidence type="ECO:0000255" key="2">
    <source>
        <dbReference type="PROSITE-ProRule" id="PRU00175"/>
    </source>
</evidence>
<evidence type="ECO:0000255" key="3">
    <source>
        <dbReference type="PROSITE-ProRule" id="PRU01052"/>
    </source>
</evidence>
<evidence type="ECO:0000269" key="4">
    <source>
    </source>
</evidence>
<evidence type="ECO:0000269" key="5">
    <source>
    </source>
</evidence>
<evidence type="ECO:0000269" key="6">
    <source>
    </source>
</evidence>
<evidence type="ECO:0000269" key="7">
    <source>
    </source>
</evidence>
<evidence type="ECO:0000269" key="8">
    <source>
    </source>
</evidence>
<evidence type="ECO:0000269" key="9">
    <source>
    </source>
</evidence>
<evidence type="ECO:0000269" key="10">
    <source>
    </source>
</evidence>
<evidence type="ECO:0000269" key="11">
    <source>
    </source>
</evidence>
<evidence type="ECO:0000303" key="12">
    <source>
    </source>
</evidence>
<evidence type="ECO:0000303" key="13">
    <source>
    </source>
</evidence>
<evidence type="ECO:0000303" key="14">
    <source>
    </source>
</evidence>
<evidence type="ECO:0000305" key="15"/>
<protein>
    <recommendedName>
        <fullName>RING finger protein 112</fullName>
        <ecNumber evidence="15">2.3.2.27</ecNumber>
    </recommendedName>
    <alternativeName>
        <fullName>Brain finger protein</fullName>
    </alternativeName>
    <alternativeName>
        <fullName evidence="13">Neurolastin</fullName>
    </alternativeName>
    <alternativeName>
        <fullName>Zinc finger protein 179</fullName>
    </alternativeName>
</protein>
<reference key="1">
    <citation type="journal article" date="1998" name="Genomics">
        <title>Molecular cloning, localization, and developmental expression of mouse brain finger protein (Bfp)/ZNF179: distribution of bfp mRNA partially coincides with the affected areas of Smith-Magenis syndrome.</title>
        <authorList>
            <person name="Orimo A."/>
            <person name="Inoue S."/>
            <person name="Ikeda K."/>
            <person name="Sato M."/>
            <person name="Kato A."/>
            <person name="Tominaga N."/>
            <person name="Suzuki M."/>
            <person name="Noda T."/>
            <person name="Watanabe M."/>
            <person name="Muramatsu M."/>
        </authorList>
    </citation>
    <scope>NUCLEOTIDE SEQUENCE [MRNA] (ISOFORM 2)</scope>
    <scope>SUBCELLULAR LOCATION</scope>
    <scope>TISSUE SPECIFICITY</scope>
    <source>
        <tissue>Brain</tissue>
    </source>
</reference>
<reference key="2">
    <citation type="journal article" date="2009" name="PLoS Biol.">
        <title>Lineage-specific biology revealed by a finished genome assembly of the mouse.</title>
        <authorList>
            <person name="Church D.M."/>
            <person name="Goodstadt L."/>
            <person name="Hillier L.W."/>
            <person name="Zody M.C."/>
            <person name="Goldstein S."/>
            <person name="She X."/>
            <person name="Bult C.J."/>
            <person name="Agarwala R."/>
            <person name="Cherry J.L."/>
            <person name="DiCuccio M."/>
            <person name="Hlavina W."/>
            <person name="Kapustin Y."/>
            <person name="Meric P."/>
            <person name="Maglott D."/>
            <person name="Birtle Z."/>
            <person name="Marques A.C."/>
            <person name="Graves T."/>
            <person name="Zhou S."/>
            <person name="Teague B."/>
            <person name="Potamousis K."/>
            <person name="Churas C."/>
            <person name="Place M."/>
            <person name="Herschleb J."/>
            <person name="Runnheim R."/>
            <person name="Forrest D."/>
            <person name="Amos-Landgraf J."/>
            <person name="Schwartz D.C."/>
            <person name="Cheng Z."/>
            <person name="Lindblad-Toh K."/>
            <person name="Eichler E.E."/>
            <person name="Ponting C.P."/>
        </authorList>
    </citation>
    <scope>NUCLEOTIDE SEQUENCE [LARGE SCALE GENOMIC DNA]</scope>
    <source>
        <strain>C57BL/6J</strain>
    </source>
</reference>
<reference key="3">
    <citation type="journal article" date="2004" name="Genome Res.">
        <title>The status, quality, and expansion of the NIH full-length cDNA project: the Mammalian Gene Collection (MGC).</title>
        <authorList>
            <consortium name="The MGC Project Team"/>
        </authorList>
    </citation>
    <scope>NUCLEOTIDE SEQUENCE [LARGE SCALE MRNA] (ISOFORMS 1 AND 3)</scope>
    <source>
        <tissue>Eye</tissue>
    </source>
</reference>
<reference key="4">
    <citation type="journal article" date="2005" name="Science">
        <title>The transcriptional landscape of the mammalian genome.</title>
        <authorList>
            <person name="Carninci P."/>
            <person name="Kasukawa T."/>
            <person name="Katayama S."/>
            <person name="Gough J."/>
            <person name="Frith M.C."/>
            <person name="Maeda N."/>
            <person name="Oyama R."/>
            <person name="Ravasi T."/>
            <person name="Lenhard B."/>
            <person name="Wells C."/>
            <person name="Kodzius R."/>
            <person name="Shimokawa K."/>
            <person name="Bajic V.B."/>
            <person name="Brenner S.E."/>
            <person name="Batalov S."/>
            <person name="Forrest A.R."/>
            <person name="Zavolan M."/>
            <person name="Davis M.J."/>
            <person name="Wilming L.G."/>
            <person name="Aidinis V."/>
            <person name="Allen J.E."/>
            <person name="Ambesi-Impiombato A."/>
            <person name="Apweiler R."/>
            <person name="Aturaliya R.N."/>
            <person name="Bailey T.L."/>
            <person name="Bansal M."/>
            <person name="Baxter L."/>
            <person name="Beisel K.W."/>
            <person name="Bersano T."/>
            <person name="Bono H."/>
            <person name="Chalk A.M."/>
            <person name="Chiu K.P."/>
            <person name="Choudhary V."/>
            <person name="Christoffels A."/>
            <person name="Clutterbuck D.R."/>
            <person name="Crowe M.L."/>
            <person name="Dalla E."/>
            <person name="Dalrymple B.P."/>
            <person name="de Bono B."/>
            <person name="Della Gatta G."/>
            <person name="di Bernardo D."/>
            <person name="Down T."/>
            <person name="Engstrom P."/>
            <person name="Fagiolini M."/>
            <person name="Faulkner G."/>
            <person name="Fletcher C.F."/>
            <person name="Fukushima T."/>
            <person name="Furuno M."/>
            <person name="Futaki S."/>
            <person name="Gariboldi M."/>
            <person name="Georgii-Hemming P."/>
            <person name="Gingeras T.R."/>
            <person name="Gojobori T."/>
            <person name="Green R.E."/>
            <person name="Gustincich S."/>
            <person name="Harbers M."/>
            <person name="Hayashi Y."/>
            <person name="Hensch T.K."/>
            <person name="Hirokawa N."/>
            <person name="Hill D."/>
            <person name="Huminiecki L."/>
            <person name="Iacono M."/>
            <person name="Ikeo K."/>
            <person name="Iwama A."/>
            <person name="Ishikawa T."/>
            <person name="Jakt M."/>
            <person name="Kanapin A."/>
            <person name="Katoh M."/>
            <person name="Kawasawa Y."/>
            <person name="Kelso J."/>
            <person name="Kitamura H."/>
            <person name="Kitano H."/>
            <person name="Kollias G."/>
            <person name="Krishnan S.P."/>
            <person name="Kruger A."/>
            <person name="Kummerfeld S.K."/>
            <person name="Kurochkin I.V."/>
            <person name="Lareau L.F."/>
            <person name="Lazarevic D."/>
            <person name="Lipovich L."/>
            <person name="Liu J."/>
            <person name="Liuni S."/>
            <person name="McWilliam S."/>
            <person name="Madan Babu M."/>
            <person name="Madera M."/>
            <person name="Marchionni L."/>
            <person name="Matsuda H."/>
            <person name="Matsuzawa S."/>
            <person name="Miki H."/>
            <person name="Mignone F."/>
            <person name="Miyake S."/>
            <person name="Morris K."/>
            <person name="Mottagui-Tabar S."/>
            <person name="Mulder N."/>
            <person name="Nakano N."/>
            <person name="Nakauchi H."/>
            <person name="Ng P."/>
            <person name="Nilsson R."/>
            <person name="Nishiguchi S."/>
            <person name="Nishikawa S."/>
            <person name="Nori F."/>
            <person name="Ohara O."/>
            <person name="Okazaki Y."/>
            <person name="Orlando V."/>
            <person name="Pang K.C."/>
            <person name="Pavan W.J."/>
            <person name="Pavesi G."/>
            <person name="Pesole G."/>
            <person name="Petrovsky N."/>
            <person name="Piazza S."/>
            <person name="Reed J."/>
            <person name="Reid J.F."/>
            <person name="Ring B.Z."/>
            <person name="Ringwald M."/>
            <person name="Rost B."/>
            <person name="Ruan Y."/>
            <person name="Salzberg S.L."/>
            <person name="Sandelin A."/>
            <person name="Schneider C."/>
            <person name="Schoenbach C."/>
            <person name="Sekiguchi K."/>
            <person name="Semple C.A."/>
            <person name="Seno S."/>
            <person name="Sessa L."/>
            <person name="Sheng Y."/>
            <person name="Shibata Y."/>
            <person name="Shimada H."/>
            <person name="Shimada K."/>
            <person name="Silva D."/>
            <person name="Sinclair B."/>
            <person name="Sperling S."/>
            <person name="Stupka E."/>
            <person name="Sugiura K."/>
            <person name="Sultana R."/>
            <person name="Takenaka Y."/>
            <person name="Taki K."/>
            <person name="Tammoja K."/>
            <person name="Tan S.L."/>
            <person name="Tang S."/>
            <person name="Taylor M.S."/>
            <person name="Tegner J."/>
            <person name="Teichmann S.A."/>
            <person name="Ueda H.R."/>
            <person name="van Nimwegen E."/>
            <person name="Verardo R."/>
            <person name="Wei C.L."/>
            <person name="Yagi K."/>
            <person name="Yamanishi H."/>
            <person name="Zabarovsky E."/>
            <person name="Zhu S."/>
            <person name="Zimmer A."/>
            <person name="Hide W."/>
            <person name="Bult C."/>
            <person name="Grimmond S.M."/>
            <person name="Teasdale R.D."/>
            <person name="Liu E.T."/>
            <person name="Brusic V."/>
            <person name="Quackenbush J."/>
            <person name="Wahlestedt C."/>
            <person name="Mattick J.S."/>
            <person name="Hume D.A."/>
            <person name="Kai C."/>
            <person name="Sasaki D."/>
            <person name="Tomaru Y."/>
            <person name="Fukuda S."/>
            <person name="Kanamori-Katayama M."/>
            <person name="Suzuki M."/>
            <person name="Aoki J."/>
            <person name="Arakawa T."/>
            <person name="Iida J."/>
            <person name="Imamura K."/>
            <person name="Itoh M."/>
            <person name="Kato T."/>
            <person name="Kawaji H."/>
            <person name="Kawagashira N."/>
            <person name="Kawashima T."/>
            <person name="Kojima M."/>
            <person name="Kondo S."/>
            <person name="Konno H."/>
            <person name="Nakano K."/>
            <person name="Ninomiya N."/>
            <person name="Nishio T."/>
            <person name="Okada M."/>
            <person name="Plessy C."/>
            <person name="Shibata K."/>
            <person name="Shiraki T."/>
            <person name="Suzuki S."/>
            <person name="Tagami M."/>
            <person name="Waki K."/>
            <person name="Watahiki A."/>
            <person name="Okamura-Oho Y."/>
            <person name="Suzuki H."/>
            <person name="Kawai J."/>
            <person name="Hayashizaki Y."/>
        </authorList>
    </citation>
    <scope>NUCLEOTIDE SEQUENCE [LARGE SCALE MRNA] OF 399-654</scope>
    <source>
        <strain>C57BL/6J</strain>
        <tissue>Eye</tissue>
    </source>
</reference>
<reference key="5">
    <citation type="journal article" date="2011" name="Cell Death Differ.">
        <title>A novel RING finger protein, Znf179, modulates cell cycle exit and neuronal differentiation of P19 embryonal carcinoma cells.</title>
        <authorList>
            <person name="Pao P.C."/>
            <person name="Huang N.K."/>
            <person name="Liu Y.W."/>
            <person name="Yeh S.H."/>
            <person name="Lin S.T."/>
            <person name="Hsieh C.P."/>
            <person name="Huang A.M."/>
            <person name="Huang H.S."/>
            <person name="Tseng J.T."/>
            <person name="Chang W.C."/>
            <person name="Lee Y.C."/>
        </authorList>
    </citation>
    <scope>FUNCTION</scope>
    <scope>TISSUE SPECIFICITY</scope>
    <scope>DISRUPTION PHENOTYPE</scope>
    <scope>ALTERNATIVE SPLICING</scope>
</reference>
<reference key="6">
    <citation type="journal article" date="2013" name="J. Biomed. Sci.">
        <title>Analysis of the interaction between Zinc finger protein 179 (Znf179) and promyelocytic leukemia zinc finger (Plzf).</title>
        <authorList>
            <person name="Lin D.Y."/>
            <person name="Huang C.C."/>
            <person name="Hsieh Y.T."/>
            <person name="Lin H.C."/>
            <person name="Pao P.C."/>
            <person name="Tsou J.H."/>
            <person name="Lai C.Y."/>
            <person name="Hung L.Y."/>
            <person name="Wang J.M."/>
            <person name="Chang W.C."/>
            <person name="Lee Y.C."/>
        </authorList>
    </citation>
    <scope>INTERACTION WITH ZBTB16</scope>
    <scope>SUBCELLULAR LOCATION</scope>
</reference>
<reference key="7">
    <citation type="journal article" date="2015" name="Cell Rep.">
        <title>Neurolastin, a dynamin family GTPase, regulates excitatory synapses and spine density.</title>
        <authorList>
            <person name="Lomash R.M."/>
            <person name="Gu X."/>
            <person name="Youle R.J."/>
            <person name="Lu W."/>
            <person name="Roche K.W."/>
        </authorList>
    </citation>
    <scope>FUNCTION</scope>
    <scope>SUBUNIT</scope>
    <scope>DISRUPTION PHENOTYPE</scope>
    <scope>MUTAGENESIS OF HIS-97 AND ARG-340</scope>
    <scope>SUBCELLULAR LOCATION</scope>
    <scope>AUTO-UBIQUITINATION</scope>
</reference>
<reference key="8">
    <citation type="journal article" date="2016" name="Neuropharmacology">
        <title>The sigma-1 receptor-zinc finger protein 179 pathway protects against hydrogen peroxide-induced cell injury.</title>
        <authorList>
            <person name="Su T.C."/>
            <person name="Lin S.H."/>
            <person name="Lee P.T."/>
            <person name="Yeh S.H."/>
            <person name="Hsieh T.H."/>
            <person name="Chou S.Y."/>
            <person name="Su T.P."/>
            <person name="Hung J.J."/>
            <person name="Chang W.C."/>
            <person name="Lee Y.C."/>
            <person name="Chuang J.Y."/>
        </authorList>
    </citation>
    <scope>FUNCTION</scope>
    <scope>INTERACTION WITH SIGMAR1</scope>
    <scope>DISRUPTION PHENOTYPE</scope>
</reference>
<reference key="9">
    <citation type="journal article" date="2017" name="Mol. Neurobiol.">
        <title>Important roles of ring finger protein 112 in embryonic vascular development and brain functions.</title>
        <authorList>
            <person name="Tsou J.H."/>
            <person name="Yang Y.C."/>
            <person name="Pao P.C."/>
            <person name="Lin H.C."/>
            <person name="Huang N.K."/>
            <person name="Lin S.T."/>
            <person name="Hsu K.S."/>
            <person name="Yeh C.M."/>
            <person name="Lee K.H."/>
            <person name="Kuo C.J."/>
            <person name="Yang D.M."/>
            <person name="Lin J.H."/>
            <person name="Chang W.C."/>
            <person name="Lee Y.C."/>
        </authorList>
    </citation>
    <scope>FUNCTION</scope>
    <scope>DISRUPTION PHENOTYPE</scope>
    <scope>SUBCELLULAR LOCATION</scope>
    <scope>TISSUE SPECIFICITY</scope>
</reference>
<reference key="10">
    <citation type="journal article" date="2017" name="Redox Biol.">
        <title>Specificity protein 1-zinc finger protein 179 pathway is involved in the attenuation of oxidative stress following brain injury.</title>
        <authorList>
            <person name="Chuang J.Y."/>
            <person name="Kao T.J."/>
            <person name="Lin S.H."/>
            <person name="Wu A.C."/>
            <person name="Lee P.T."/>
            <person name="Su T.P."/>
            <person name="Yeh S.H."/>
            <person name="Lee Y.C."/>
            <person name="Wu C.C."/>
            <person name="Chang W.C."/>
        </authorList>
    </citation>
    <scope>FUNCTION</scope>
    <scope>INDUCTION</scope>
    <scope>INTERACTION WITH SP1</scope>
    <scope>SUBCELLULAR LOCATION</scope>
</reference>
<reference key="11">
    <citation type="journal article" date="2017" name="Sci. Rep.">
        <title>Znf179 induces differentiation and growth arrest of human primary glioblastoma multiforme in a p53-dependent cell cycle pathway.</title>
        <authorList>
            <person name="Lee K.H."/>
            <person name="Chen C.L."/>
            <person name="Lee Y.C."/>
            <person name="Kao T.J."/>
            <person name="Chen K.Y."/>
            <person name="Fang C.Y."/>
            <person name="Chang W.C."/>
            <person name="Chiang Y.H."/>
            <person name="Huang C.C."/>
        </authorList>
    </citation>
    <scope>FUNCTION</scope>
    <scope>DISRUPTION PHENOTYPE</scope>
</reference>
<comment type="function">
    <text evidence="4 6 7 8 9 10">E3 ubiquitin-protein ligase that plays an important role in neuronal differentiation, including neurogenesis and gliogenesis, during brain development. During embryonic development initiates neuronal differentiation by inducing cell cycle arrest at the G0/G1 phase through up-regulation of cell-cycle regulatory proteins (PubMed:21566658, PubMed:28684796). Plays a role not only in the fetal period during the development of the nervous system, but also in the adult brain, where it is involved in the maintenance of neural functions and protection of the nervous tissue cells from oxidative stress-induced damage (PubMed:26792191, PubMed:26951452, PubMed:27918959). Exhibits GTPase and E3 ubiquitin-protein ligase activities. Regulates dendritic spine density and synaptic neurotransmission; its ability to hydrolyze GTP is involved in the maintenance of dendritic spine density (PubMed:26212327).</text>
</comment>
<comment type="catalytic activity">
    <reaction evidence="15">
        <text>S-ubiquitinyl-[E2 ubiquitin-conjugating enzyme]-L-cysteine + [acceptor protein]-L-lysine = [E2 ubiquitin-conjugating enzyme]-L-cysteine + N(6)-ubiquitinyl-[acceptor protein]-L-lysine.</text>
        <dbReference type="EC" id="2.3.2.27"/>
    </reaction>
</comment>
<comment type="pathway">
    <text evidence="15">Protein modification; protein ubiquitination.</text>
</comment>
<comment type="subunit">
    <text evidence="5 6 7 9">Self-associates (PubMed:26212327). Interacts with SP1 in an oxidative stress-regulated manner (PubMed:27918959). Interacts with SIGMAR1 in an oxidative stress-regulated manner (PubMed:26792191). Interacts with ZBTB16 (via C2H2-type zinc finger domains 1 and 2) (PubMed:24359566).</text>
</comment>
<comment type="subcellular location">
    <subcellularLocation>
        <location evidence="6">Membrane</location>
        <topology evidence="1">Multi-pass membrane protein</topology>
    </subcellularLocation>
    <subcellularLocation>
        <location evidence="6">Membrane</location>
        <topology evidence="6">Peripheral membrane protein</topology>
    </subcellularLocation>
    <subcellularLocation>
        <location evidence="5 9 11">Cytoplasm</location>
    </subcellularLocation>
    <subcellularLocation>
        <location evidence="5 8 9 11">Nucleus</location>
    </subcellularLocation>
    <subcellularLocation>
        <location evidence="5">Nucleus</location>
        <location evidence="5">Nuclear body</location>
    </subcellularLocation>
    <subcellularLocation>
        <location evidence="5">Nucleus</location>
        <location evidence="5">Nucleoplasm</location>
    </subcellularLocation>
    <subcellularLocation>
        <location evidence="6">Endosome</location>
    </subcellularLocation>
    <subcellularLocation>
        <location evidence="6">Cytoplasmic vesicle</location>
        <location evidence="6">Secretory vesicle</location>
        <location evidence="6">Synaptic vesicle</location>
    </subcellularLocation>
    <subcellularLocation>
        <location evidence="6">Postsynaptic density</location>
    </subcellularLocation>
    <subcellularLocation>
        <location evidence="8">Perikaryon</location>
    </subcellularLocation>
    <subcellularLocation>
        <location evidence="8">Cell projection</location>
        <location evidence="8">Neuron projection</location>
    </subcellularLocation>
    <text evidence="5 8 9 11">Predominantly in the nucleus, but some amounts were also found in the cytoplasm (PubMed:24359566, PubMed:9806830). Oxidative stress stimulates its shuttling from the cytoplasm into the nucleus (PubMed:27918959). Recruited to nuclear bodies via its interaction with ZBTB16 (PubMed:24359566). Localizes to the cell soma and neuritis and only slightly to the nucleus in the neurons of most brain areas (PubMed:26951452).</text>
</comment>
<comment type="alternative products">
    <event type="alternative splicing"/>
    <isoform>
        <id>Q96DY5-1</id>
        <name>1</name>
        <sequence type="displayed"/>
    </isoform>
    <isoform>
        <id>Q96DY5-2</id>
        <name>2</name>
        <sequence type="described" ref="VSP_042392"/>
    </isoform>
    <isoform>
        <id>Q96DY5-3</id>
        <name>3</name>
        <sequence type="described" ref="VSP_042393"/>
    </isoform>
</comment>
<comment type="tissue specificity">
    <text evidence="4 8 11">Expressed in most of the brain areas, including cortex, striatum, hippocampus, thalamus, and cerebellum (at protein level). Expressed in lateral amygdaloid nucleus, and ventromedial hypothalamus. Also expressed strongly in the marginal zone of brain vesicles, optic stalk, and cartilage primordium.</text>
</comment>
<comment type="induction">
    <text evidence="9">Up-regulated by traumatic brain injury and hydrogen peroxide (at protein level).</text>
</comment>
<comment type="PTM">
    <text evidence="6">Auto-ubiquitinated.</text>
</comment>
<comment type="disruption phenotype">
    <text evidence="4 6 7 8 10">Embryos exhibit blood vascular defects and die in utero. The survivors manifest growth retardation as indicated by smaller size and a reduced weight, and display impairment of brain functions including motor balance, and spatial learning and memory (PubMed:26951452). Mice exhibit a reduction in the size of brains, reduced dendritic spine density, impaired synaptic transmission and reduced levels of antioxidant enzymes in the hippocampus (PubMed:26212327, PubMed:26792191). Knockdown of RNF112 diminishes neuronal differentiation, glial differentiation and dendritic arborization in primary cerebellar granule cells (PubMed:21566658, PubMed:28684796).</text>
</comment>
<comment type="similarity">
    <text evidence="3">Belongs to the TRAFAC class dynamin-like GTPase superfamily. GB1/RHD3 GTPase family. GB1 subfamily.</text>
</comment>
<comment type="sequence caution" evidence="15">
    <conflict type="frameshift">
        <sequence resource="EMBL-CDS" id="BAA34180"/>
    </conflict>
</comment>
<gene>
    <name type="primary">Rnf112</name>
    <name type="synonym">Bfp</name>
    <name type="synonym">Znf179</name>
</gene>
<proteinExistence type="evidence at protein level"/>